<dbReference type="EMBL" id="CP000038">
    <property type="protein sequence ID" value="AAZ90612.1"/>
    <property type="molecule type" value="Genomic_DNA"/>
</dbReference>
<dbReference type="RefSeq" id="WP_001296623.1">
    <property type="nucleotide sequence ID" value="NC_007384.1"/>
</dbReference>
<dbReference type="SMR" id="Q3YV50"/>
<dbReference type="GeneID" id="93777970"/>
<dbReference type="KEGG" id="ssn:SSON_4097"/>
<dbReference type="HOGENOM" id="CLU_171174_2_0_6"/>
<dbReference type="Proteomes" id="UP000002529">
    <property type="component" value="Chromosome"/>
</dbReference>
<dbReference type="GO" id="GO:0005737">
    <property type="term" value="C:cytoplasm"/>
    <property type="evidence" value="ECO:0007669"/>
    <property type="project" value="UniProtKB-SubCell"/>
</dbReference>
<dbReference type="GO" id="GO:0000917">
    <property type="term" value="P:division septum assembly"/>
    <property type="evidence" value="ECO:0007669"/>
    <property type="project" value="UniProtKB-KW"/>
</dbReference>
<dbReference type="GO" id="GO:0043093">
    <property type="term" value="P:FtsZ-dependent cytokinesis"/>
    <property type="evidence" value="ECO:0007669"/>
    <property type="project" value="UniProtKB-UniRule"/>
</dbReference>
<dbReference type="FunFam" id="1.20.5.340:FF:000014">
    <property type="entry name" value="Cell division protein ZapB"/>
    <property type="match status" value="1"/>
</dbReference>
<dbReference type="Gene3D" id="1.20.5.340">
    <property type="match status" value="1"/>
</dbReference>
<dbReference type="HAMAP" id="MF_01196">
    <property type="entry name" value="ZapB"/>
    <property type="match status" value="1"/>
</dbReference>
<dbReference type="InterPro" id="IPR009252">
    <property type="entry name" value="Cell_div_ZapB"/>
</dbReference>
<dbReference type="NCBIfam" id="NF011951">
    <property type="entry name" value="PRK15422.1"/>
    <property type="match status" value="1"/>
</dbReference>
<dbReference type="Pfam" id="PF06005">
    <property type="entry name" value="ZapB"/>
    <property type="match status" value="1"/>
</dbReference>
<organism>
    <name type="scientific">Shigella sonnei (strain Ss046)</name>
    <dbReference type="NCBI Taxonomy" id="300269"/>
    <lineage>
        <taxon>Bacteria</taxon>
        <taxon>Pseudomonadati</taxon>
        <taxon>Pseudomonadota</taxon>
        <taxon>Gammaproteobacteria</taxon>
        <taxon>Enterobacterales</taxon>
        <taxon>Enterobacteriaceae</taxon>
        <taxon>Shigella</taxon>
    </lineage>
</organism>
<accession>Q3YV50</accession>
<feature type="chain" id="PRO_0000333936" description="Cell division protein ZapB">
    <location>
        <begin position="1"/>
        <end position="81"/>
    </location>
</feature>
<feature type="region of interest" description="Disordered" evidence="2">
    <location>
        <begin position="36"/>
        <end position="67"/>
    </location>
</feature>
<feature type="coiled-coil region" evidence="1">
    <location>
        <begin position="5"/>
        <end position="81"/>
    </location>
</feature>
<feature type="compositionally biased region" description="Polar residues" evidence="2">
    <location>
        <begin position="37"/>
        <end position="47"/>
    </location>
</feature>
<feature type="compositionally biased region" description="Basic and acidic residues" evidence="2">
    <location>
        <begin position="48"/>
        <end position="62"/>
    </location>
</feature>
<feature type="modified residue" description="N6-acetyllysine" evidence="1">
    <location>
        <position position="10"/>
    </location>
</feature>
<keyword id="KW-0007">Acetylation</keyword>
<keyword id="KW-0131">Cell cycle</keyword>
<keyword id="KW-0132">Cell division</keyword>
<keyword id="KW-0175">Coiled coil</keyword>
<keyword id="KW-0963">Cytoplasm</keyword>
<keyword id="KW-1185">Reference proteome</keyword>
<keyword id="KW-0717">Septation</keyword>
<reference key="1">
    <citation type="journal article" date="2005" name="Nucleic Acids Res.">
        <title>Genome dynamics and diversity of Shigella species, the etiologic agents of bacillary dysentery.</title>
        <authorList>
            <person name="Yang F."/>
            <person name="Yang J."/>
            <person name="Zhang X."/>
            <person name="Chen L."/>
            <person name="Jiang Y."/>
            <person name="Yan Y."/>
            <person name="Tang X."/>
            <person name="Wang J."/>
            <person name="Xiong Z."/>
            <person name="Dong J."/>
            <person name="Xue Y."/>
            <person name="Zhu Y."/>
            <person name="Xu X."/>
            <person name="Sun L."/>
            <person name="Chen S."/>
            <person name="Nie H."/>
            <person name="Peng J."/>
            <person name="Xu J."/>
            <person name="Wang Y."/>
            <person name="Yuan Z."/>
            <person name="Wen Y."/>
            <person name="Yao Z."/>
            <person name="Shen Y."/>
            <person name="Qiang B."/>
            <person name="Hou Y."/>
            <person name="Yu J."/>
            <person name="Jin Q."/>
        </authorList>
    </citation>
    <scope>NUCLEOTIDE SEQUENCE [LARGE SCALE GENOMIC DNA]</scope>
    <source>
        <strain>Ss046</strain>
    </source>
</reference>
<evidence type="ECO:0000255" key="1">
    <source>
        <dbReference type="HAMAP-Rule" id="MF_01196"/>
    </source>
</evidence>
<evidence type="ECO:0000256" key="2">
    <source>
        <dbReference type="SAM" id="MobiDB-lite"/>
    </source>
</evidence>
<gene>
    <name evidence="1" type="primary">zapB</name>
    <name type="ordered locus">SSON_4097</name>
</gene>
<proteinExistence type="inferred from homology"/>
<comment type="function">
    <text evidence="1">Non-essential, abundant cell division factor that is required for proper Z-ring formation. It is recruited early to the divisome by direct interaction with FtsZ, stimulating Z-ring assembly and thereby promoting cell division earlier in the cell cycle. Its recruitment to the Z-ring requires functional FtsA or ZipA.</text>
</comment>
<comment type="subunit">
    <text evidence="1">Homodimer. The ends of the coiled-coil dimer bind to each other, forming polymers. Interacts with FtsZ.</text>
</comment>
<comment type="subcellular location">
    <subcellularLocation>
        <location>Cytoplasm</location>
    </subcellularLocation>
    <text evidence="1">Localizes to the septum at mid-cell, in a FtsZ-like pattern.</text>
</comment>
<comment type="similarity">
    <text evidence="1">Belongs to the ZapB family.</text>
</comment>
<protein>
    <recommendedName>
        <fullName evidence="1">Cell division protein ZapB</fullName>
    </recommendedName>
</protein>
<sequence length="81" mass="9635">MTMSLEVFEKLEAKVQQAIDTITLLQMEIEELKEKNNSLSQEVQNAQHQREELERENNHLKEQQNGWQERLQALLGRMEEV</sequence>
<name>ZAPB_SHISS</name>